<organism>
    <name type="scientific">Culex pipiens pipiens</name>
    <name type="common">Northern house mosquito</name>
    <dbReference type="NCBI Taxonomy" id="38569"/>
    <lineage>
        <taxon>Eukaryota</taxon>
        <taxon>Metazoa</taxon>
        <taxon>Ecdysozoa</taxon>
        <taxon>Arthropoda</taxon>
        <taxon>Hexapoda</taxon>
        <taxon>Insecta</taxon>
        <taxon>Pterygota</taxon>
        <taxon>Neoptera</taxon>
        <taxon>Endopterygota</taxon>
        <taxon>Diptera</taxon>
        <taxon>Nematocera</taxon>
        <taxon>Culicoidea</taxon>
        <taxon>Culicidae</taxon>
        <taxon>Culicinae</taxon>
        <taxon>Culicini</taxon>
        <taxon>Culex</taxon>
        <taxon>Culex</taxon>
    </lineage>
</organism>
<name>CECA_CULPP</name>
<protein>
    <recommendedName>
        <fullName>Cecropin-A</fullName>
    </recommendedName>
</protein>
<sequence>MNFNKLFVIVLLAALAFFGQAEAGGLKKFGKKLEGVGKRVFKASEKALPVVTGFKALGK</sequence>
<accession>Q86PR6</accession>
<evidence type="ECO:0000250" key="1"/>
<evidence type="ECO:0000255" key="2"/>
<evidence type="ECO:0000305" key="3"/>
<comment type="function">
    <text evidence="1">Cecropins have lytic and antibacterial activity against several Gram-positive and Gram-negative bacteria.</text>
</comment>
<comment type="subcellular location">
    <subcellularLocation>
        <location evidence="1">Secreted</location>
    </subcellularLocation>
</comment>
<comment type="similarity">
    <text evidence="3">Belongs to the cecropin family.</text>
</comment>
<feature type="signal peptide" evidence="1">
    <location>
        <begin position="1"/>
        <end position="23"/>
    </location>
</feature>
<feature type="chain" id="PRO_0000004836" description="Cecropin-A">
    <location>
        <begin position="24"/>
        <end position="57"/>
    </location>
</feature>
<feature type="modified residue" description="Leucine amide" evidence="2">
    <location>
        <position position="57"/>
    </location>
</feature>
<reference key="1">
    <citation type="submission" date="2002-12" db="EMBL/GenBank/DDBJ databases">
        <title>Innate immunity in the Culex pipiens-Wuchereria bancrofti host-parasite relationship.</title>
        <authorList>
            <person name="Bartholomay L.C."/>
            <person name="Farid H.A."/>
            <person name="Ramzy R.M."/>
            <person name="Christensen B.M."/>
        </authorList>
    </citation>
    <scope>NUCLEOTIDE SEQUENCE [MRNA]</scope>
    <source>
        <strain>Iowa state</strain>
    </source>
</reference>
<dbReference type="EMBL" id="AY189808">
    <property type="protein sequence ID" value="AAO38516.1"/>
    <property type="molecule type" value="mRNA"/>
</dbReference>
<dbReference type="SMR" id="Q86PR6"/>
<dbReference type="GO" id="GO:0005615">
    <property type="term" value="C:extracellular space"/>
    <property type="evidence" value="ECO:0007669"/>
    <property type="project" value="TreeGrafter"/>
</dbReference>
<dbReference type="GO" id="GO:0019731">
    <property type="term" value="P:antibacterial humoral response"/>
    <property type="evidence" value="ECO:0007669"/>
    <property type="project" value="InterPro"/>
</dbReference>
<dbReference type="GO" id="GO:0050829">
    <property type="term" value="P:defense response to Gram-negative bacterium"/>
    <property type="evidence" value="ECO:0007669"/>
    <property type="project" value="TreeGrafter"/>
</dbReference>
<dbReference type="GO" id="GO:0050830">
    <property type="term" value="P:defense response to Gram-positive bacterium"/>
    <property type="evidence" value="ECO:0007669"/>
    <property type="project" value="UniProtKB-ARBA"/>
</dbReference>
<dbReference type="GO" id="GO:0045087">
    <property type="term" value="P:innate immune response"/>
    <property type="evidence" value="ECO:0007669"/>
    <property type="project" value="UniProtKB-KW"/>
</dbReference>
<dbReference type="InterPro" id="IPR000875">
    <property type="entry name" value="Cecropin"/>
</dbReference>
<dbReference type="InterPro" id="IPR020400">
    <property type="entry name" value="Cecropin_insect"/>
</dbReference>
<dbReference type="PANTHER" id="PTHR38329">
    <property type="entry name" value="CECROPIN-A1-RELATED"/>
    <property type="match status" value="1"/>
</dbReference>
<dbReference type="PANTHER" id="PTHR38329:SF1">
    <property type="entry name" value="CECROPIN-A1-RELATED"/>
    <property type="match status" value="1"/>
</dbReference>
<dbReference type="Pfam" id="PF00272">
    <property type="entry name" value="Cecropin"/>
    <property type="match status" value="1"/>
</dbReference>
<gene>
    <name type="primary">CECA</name>
</gene>
<keyword id="KW-0027">Amidation</keyword>
<keyword id="KW-0044">Antibiotic</keyword>
<keyword id="KW-0929">Antimicrobial</keyword>
<keyword id="KW-0391">Immunity</keyword>
<keyword id="KW-0399">Innate immunity</keyword>
<keyword id="KW-0964">Secreted</keyword>
<keyword id="KW-0732">Signal</keyword>
<proteinExistence type="inferred from homology"/>